<proteinExistence type="inferred from homology"/>
<organism>
    <name type="scientific">Mycobacterium tuberculosis (strain CDC 1551 / Oshkosh)</name>
    <dbReference type="NCBI Taxonomy" id="83331"/>
    <lineage>
        <taxon>Bacteria</taxon>
        <taxon>Bacillati</taxon>
        <taxon>Actinomycetota</taxon>
        <taxon>Actinomycetes</taxon>
        <taxon>Mycobacteriales</taxon>
        <taxon>Mycobacteriaceae</taxon>
        <taxon>Mycobacterium</taxon>
        <taxon>Mycobacterium tuberculosis complex</taxon>
    </lineage>
</organism>
<name>Y2577_MYCTO</name>
<accession>P9WL80</accession>
<accession>L0TCU0</accession>
<accession>Q50644</accession>
<sequence>MGADLKQPQDADSPPKGVSRRRFLTTGAAAVVGTGVGAGGTALLSSHPRGPAVWYQRGRSGAPPVGGLHLQFGRNASTEMVVSWHTTDTVGNPRVMLGTPTSGFGSVVVAETRSYRDAKSNTEVRVNHAHLTNLTPDTDYVYAAVHDGTTPELGTARTAPSGRKPLRFTSFGDQSTPALGRLADGRYVSDNIGSPFAGDITIAIERIAPLFNLINGDLCYANLAQDRIRTWSDWFDNNTRSARYRPWMPAAGNHENEVGNGPIGYDAYQTYFAVPDSGSSPQLRGLWYSFTAGSVRVISLHNDDVCYQDGGNSYVRGYSGGEQRRWLQAELANARRDSEIDWVVVCMHQTAISTADDNNGADLGIRQEWLPLFDQYQVDLVVCGHEHHYERSHPLRGALGTDTRTPIPVDTRSDLIDSTRGTVHLVIGGGGTSKPTNALLFPQPRCQVITGVGDFDPAIRRKPSIFVLEDAPWSAFRDRDNPYGFVAFDVDPGQPGGTTSIKATYYAVTGPFGGLTVIDQFTLTKPRGG</sequence>
<protein>
    <recommendedName>
        <fullName>Uncharacterized protein MT2654</fullName>
    </recommendedName>
</protein>
<keyword id="KW-1185">Reference proteome</keyword>
<keyword id="KW-0732">Signal</keyword>
<dbReference type="EMBL" id="AE000516">
    <property type="protein sequence ID" value="AAK46967.1"/>
    <property type="molecule type" value="Genomic_DNA"/>
</dbReference>
<dbReference type="PIR" id="H70724">
    <property type="entry name" value="H70724"/>
</dbReference>
<dbReference type="RefSeq" id="WP_003413355.1">
    <property type="nucleotide sequence ID" value="NZ_KK341227.1"/>
</dbReference>
<dbReference type="SMR" id="P9WL80"/>
<dbReference type="KEGG" id="mtc:MT2654"/>
<dbReference type="PATRIC" id="fig|83331.31.peg.2861"/>
<dbReference type="HOGENOM" id="CLU_026766_0_0_11"/>
<dbReference type="Proteomes" id="UP000001020">
    <property type="component" value="Chromosome"/>
</dbReference>
<dbReference type="GO" id="GO:0003993">
    <property type="term" value="F:acid phosphatase activity"/>
    <property type="evidence" value="ECO:0007669"/>
    <property type="project" value="InterPro"/>
</dbReference>
<dbReference type="GO" id="GO:0046872">
    <property type="term" value="F:metal ion binding"/>
    <property type="evidence" value="ECO:0007669"/>
    <property type="project" value="InterPro"/>
</dbReference>
<dbReference type="FunFam" id="3.60.21.10:FF:000124">
    <property type="entry name" value="Metallo phosphoesterase"/>
    <property type="match status" value="1"/>
</dbReference>
<dbReference type="Gene3D" id="3.60.21.10">
    <property type="match status" value="1"/>
</dbReference>
<dbReference type="Gene3D" id="2.60.40.380">
    <property type="entry name" value="Purple acid phosphatase-like, N-terminal"/>
    <property type="match status" value="1"/>
</dbReference>
<dbReference type="InterPro" id="IPR004843">
    <property type="entry name" value="Calcineurin-like_PHP_ApaH"/>
</dbReference>
<dbReference type="InterPro" id="IPR029052">
    <property type="entry name" value="Metallo-depent_PP-like"/>
</dbReference>
<dbReference type="InterPro" id="IPR039331">
    <property type="entry name" value="PPA-like"/>
</dbReference>
<dbReference type="InterPro" id="IPR008963">
    <property type="entry name" value="Purple_acid_Pase-like_N"/>
</dbReference>
<dbReference type="InterPro" id="IPR015914">
    <property type="entry name" value="Purple_acid_Pase_N"/>
</dbReference>
<dbReference type="InterPro" id="IPR006311">
    <property type="entry name" value="TAT_signal"/>
</dbReference>
<dbReference type="PANTHER" id="PTHR22953">
    <property type="entry name" value="ACID PHOSPHATASE RELATED"/>
    <property type="match status" value="1"/>
</dbReference>
<dbReference type="PANTHER" id="PTHR22953:SF153">
    <property type="entry name" value="PURPLE ACID PHOSPHATASE"/>
    <property type="match status" value="1"/>
</dbReference>
<dbReference type="Pfam" id="PF00149">
    <property type="entry name" value="Metallophos"/>
    <property type="match status" value="1"/>
</dbReference>
<dbReference type="Pfam" id="PF16656">
    <property type="entry name" value="Pur_ac_phosph_N"/>
    <property type="match status" value="1"/>
</dbReference>
<dbReference type="SUPFAM" id="SSF56300">
    <property type="entry name" value="Metallo-dependent phosphatases"/>
    <property type="match status" value="1"/>
</dbReference>
<dbReference type="SUPFAM" id="SSF49363">
    <property type="entry name" value="Purple acid phosphatase, N-terminal domain"/>
    <property type="match status" value="1"/>
</dbReference>
<dbReference type="PROSITE" id="PS51318">
    <property type="entry name" value="TAT"/>
    <property type="match status" value="1"/>
</dbReference>
<comment type="PTM">
    <text>Predicted to be exported by the Tat system. The position of the signal peptide cleavage has not been experimentally proven.</text>
</comment>
<feature type="signal peptide" description="Tat-type signal" evidence="1">
    <location>
        <begin position="1"/>
        <end position="52"/>
    </location>
</feature>
<feature type="chain" id="PRO_0000427525" description="Uncharacterized protein MT2654">
    <location>
        <begin position="53"/>
        <end position="529"/>
    </location>
</feature>
<feature type="region of interest" description="Disordered" evidence="2">
    <location>
        <begin position="1"/>
        <end position="20"/>
    </location>
</feature>
<gene>
    <name type="ordered locus">MT2654</name>
</gene>
<evidence type="ECO:0000255" key="1">
    <source>
        <dbReference type="PROSITE-ProRule" id="PRU00648"/>
    </source>
</evidence>
<evidence type="ECO:0000256" key="2">
    <source>
        <dbReference type="SAM" id="MobiDB-lite"/>
    </source>
</evidence>
<reference key="1">
    <citation type="journal article" date="2002" name="J. Bacteriol.">
        <title>Whole-genome comparison of Mycobacterium tuberculosis clinical and laboratory strains.</title>
        <authorList>
            <person name="Fleischmann R.D."/>
            <person name="Alland D."/>
            <person name="Eisen J.A."/>
            <person name="Carpenter L."/>
            <person name="White O."/>
            <person name="Peterson J.D."/>
            <person name="DeBoy R.T."/>
            <person name="Dodson R.J."/>
            <person name="Gwinn M.L."/>
            <person name="Haft D.H."/>
            <person name="Hickey E.K."/>
            <person name="Kolonay J.F."/>
            <person name="Nelson W.C."/>
            <person name="Umayam L.A."/>
            <person name="Ermolaeva M.D."/>
            <person name="Salzberg S.L."/>
            <person name="Delcher A."/>
            <person name="Utterback T.R."/>
            <person name="Weidman J.F."/>
            <person name="Khouri H.M."/>
            <person name="Gill J."/>
            <person name="Mikula A."/>
            <person name="Bishai W."/>
            <person name="Jacobs W.R. Jr."/>
            <person name="Venter J.C."/>
            <person name="Fraser C.M."/>
        </authorList>
    </citation>
    <scope>NUCLEOTIDE SEQUENCE [LARGE SCALE GENOMIC DNA]</scope>
    <source>
        <strain>CDC 1551 / Oshkosh</strain>
    </source>
</reference>